<feature type="chain" id="PRO_0000162951" description="NADPH-dependent 7-cyano-7-deazaguanine reductase">
    <location>
        <begin position="1"/>
        <end position="165"/>
    </location>
</feature>
<feature type="active site" description="Thioimide intermediate" evidence="1">
    <location>
        <position position="56"/>
    </location>
</feature>
<feature type="active site" description="Proton donor" evidence="1">
    <location>
        <position position="63"/>
    </location>
</feature>
<feature type="binding site" evidence="1">
    <location>
        <begin position="78"/>
        <end position="80"/>
    </location>
    <ligand>
        <name>substrate</name>
    </ligand>
</feature>
<feature type="binding site" evidence="1">
    <location>
        <begin position="97"/>
        <end position="98"/>
    </location>
    <ligand>
        <name>substrate</name>
    </ligand>
</feature>
<evidence type="ECO:0000255" key="1">
    <source>
        <dbReference type="HAMAP-Rule" id="MF_00818"/>
    </source>
</evidence>
<dbReference type="EC" id="1.7.1.13" evidence="1"/>
<dbReference type="EMBL" id="AE017194">
    <property type="protein sequence ID" value="AAS40390.1"/>
    <property type="molecule type" value="Genomic_DNA"/>
</dbReference>
<dbReference type="SMR" id="Q73BF7"/>
<dbReference type="KEGG" id="bca:BCE_1461"/>
<dbReference type="HOGENOM" id="CLU_102489_0_1_9"/>
<dbReference type="UniPathway" id="UPA00392"/>
<dbReference type="Proteomes" id="UP000002527">
    <property type="component" value="Chromosome"/>
</dbReference>
<dbReference type="GO" id="GO:0005737">
    <property type="term" value="C:cytoplasm"/>
    <property type="evidence" value="ECO:0007669"/>
    <property type="project" value="UniProtKB-SubCell"/>
</dbReference>
<dbReference type="GO" id="GO:0033739">
    <property type="term" value="F:preQ1 synthase activity"/>
    <property type="evidence" value="ECO:0007669"/>
    <property type="project" value="UniProtKB-UniRule"/>
</dbReference>
<dbReference type="GO" id="GO:0008616">
    <property type="term" value="P:queuosine biosynthetic process"/>
    <property type="evidence" value="ECO:0007669"/>
    <property type="project" value="UniProtKB-UniRule"/>
</dbReference>
<dbReference type="GO" id="GO:0006400">
    <property type="term" value="P:tRNA modification"/>
    <property type="evidence" value="ECO:0007669"/>
    <property type="project" value="UniProtKB-UniRule"/>
</dbReference>
<dbReference type="Gene3D" id="3.30.1130.10">
    <property type="match status" value="1"/>
</dbReference>
<dbReference type="HAMAP" id="MF_00818">
    <property type="entry name" value="QueF_type1"/>
    <property type="match status" value="1"/>
</dbReference>
<dbReference type="InterPro" id="IPR043133">
    <property type="entry name" value="GTP-CH-I_C/QueF"/>
</dbReference>
<dbReference type="InterPro" id="IPR050084">
    <property type="entry name" value="NADPH_dep_7-cyano-7-deazaG_red"/>
</dbReference>
<dbReference type="InterPro" id="IPR029500">
    <property type="entry name" value="QueF"/>
</dbReference>
<dbReference type="InterPro" id="IPR016856">
    <property type="entry name" value="QueF_type1"/>
</dbReference>
<dbReference type="NCBIfam" id="TIGR03139">
    <property type="entry name" value="QueF-II"/>
    <property type="match status" value="1"/>
</dbReference>
<dbReference type="PANTHER" id="PTHR34354">
    <property type="entry name" value="NADPH-DEPENDENT 7-CYANO-7-DEAZAGUANINE REDUCTASE"/>
    <property type="match status" value="1"/>
</dbReference>
<dbReference type="PANTHER" id="PTHR34354:SF1">
    <property type="entry name" value="NADPH-DEPENDENT 7-CYANO-7-DEAZAGUANINE REDUCTASE"/>
    <property type="match status" value="1"/>
</dbReference>
<dbReference type="Pfam" id="PF14489">
    <property type="entry name" value="QueF"/>
    <property type="match status" value="1"/>
</dbReference>
<dbReference type="PIRSF" id="PIRSF027377">
    <property type="entry name" value="Nitrile_oxidored_QueF"/>
    <property type="match status" value="1"/>
</dbReference>
<dbReference type="SUPFAM" id="SSF55620">
    <property type="entry name" value="Tetrahydrobiopterin biosynthesis enzymes-like"/>
    <property type="match status" value="1"/>
</dbReference>
<sequence>MAGRLDEDLKDVTLLGNQNTKYLFEYSPEILEVFDNNHPNRDYFVKFNCPEFTSLCPKTGQPDFATIYISYIPEQRMVESKSLKLYLFSFRNHGDFHEDCMNVIMNDLIKLMDPRYIEVWGKFTPRGGISIDPYCNYGRPGTKYEQMADYRMMNHDLYPETIDNR</sequence>
<keyword id="KW-0963">Cytoplasm</keyword>
<keyword id="KW-0521">NADP</keyword>
<keyword id="KW-0560">Oxidoreductase</keyword>
<keyword id="KW-0671">Queuosine biosynthesis</keyword>
<reference key="1">
    <citation type="journal article" date="2004" name="Nucleic Acids Res.">
        <title>The genome sequence of Bacillus cereus ATCC 10987 reveals metabolic adaptations and a large plasmid related to Bacillus anthracis pXO1.</title>
        <authorList>
            <person name="Rasko D.A."/>
            <person name="Ravel J."/>
            <person name="Oekstad O.A."/>
            <person name="Helgason E."/>
            <person name="Cer R.Z."/>
            <person name="Jiang L."/>
            <person name="Shores K.A."/>
            <person name="Fouts D.E."/>
            <person name="Tourasse N.J."/>
            <person name="Angiuoli S.V."/>
            <person name="Kolonay J.F."/>
            <person name="Nelson W.C."/>
            <person name="Kolstoe A.-B."/>
            <person name="Fraser C.M."/>
            <person name="Read T.D."/>
        </authorList>
    </citation>
    <scope>NUCLEOTIDE SEQUENCE [LARGE SCALE GENOMIC DNA]</scope>
    <source>
        <strain>ATCC 10987 / NRS 248</strain>
    </source>
</reference>
<accession>Q73BF7</accession>
<protein>
    <recommendedName>
        <fullName evidence="1">NADPH-dependent 7-cyano-7-deazaguanine reductase</fullName>
        <ecNumber evidence="1">1.7.1.13</ecNumber>
    </recommendedName>
    <alternativeName>
        <fullName evidence="1">7-cyano-7-carbaguanine reductase</fullName>
    </alternativeName>
    <alternativeName>
        <fullName evidence="1">NADPH-dependent nitrile oxidoreductase</fullName>
    </alternativeName>
    <alternativeName>
        <fullName evidence="1">PreQ(0) reductase</fullName>
    </alternativeName>
</protein>
<name>QUEF_BACC1</name>
<proteinExistence type="inferred from homology"/>
<comment type="function">
    <text evidence="1">Catalyzes the NADPH-dependent reduction of 7-cyano-7-deazaguanine (preQ0) to 7-aminomethyl-7-deazaguanine (preQ1).</text>
</comment>
<comment type="catalytic activity">
    <reaction evidence="1">
        <text>7-aminomethyl-7-carbaguanine + 2 NADP(+) = 7-cyano-7-deazaguanine + 2 NADPH + 3 H(+)</text>
        <dbReference type="Rhea" id="RHEA:13409"/>
        <dbReference type="ChEBI" id="CHEBI:15378"/>
        <dbReference type="ChEBI" id="CHEBI:45075"/>
        <dbReference type="ChEBI" id="CHEBI:57783"/>
        <dbReference type="ChEBI" id="CHEBI:58349"/>
        <dbReference type="ChEBI" id="CHEBI:58703"/>
        <dbReference type="EC" id="1.7.1.13"/>
    </reaction>
</comment>
<comment type="pathway">
    <text evidence="1">tRNA modification; tRNA-queuosine biosynthesis.</text>
</comment>
<comment type="subcellular location">
    <subcellularLocation>
        <location evidence="1">Cytoplasm</location>
    </subcellularLocation>
</comment>
<comment type="similarity">
    <text evidence="1">Belongs to the GTP cyclohydrolase I family. QueF type 1 subfamily.</text>
</comment>
<organism>
    <name type="scientific">Bacillus cereus (strain ATCC 10987 / NRS 248)</name>
    <dbReference type="NCBI Taxonomy" id="222523"/>
    <lineage>
        <taxon>Bacteria</taxon>
        <taxon>Bacillati</taxon>
        <taxon>Bacillota</taxon>
        <taxon>Bacilli</taxon>
        <taxon>Bacillales</taxon>
        <taxon>Bacillaceae</taxon>
        <taxon>Bacillus</taxon>
        <taxon>Bacillus cereus group</taxon>
    </lineage>
</organism>
<gene>
    <name evidence="1" type="primary">queF</name>
    <name type="ordered locus">BCE_1461</name>
</gene>